<evidence type="ECO:0000255" key="1"/>
<evidence type="ECO:0000305" key="2"/>
<feature type="signal peptide" evidence="1">
    <location>
        <begin position="1"/>
        <end position="18"/>
    </location>
</feature>
<feature type="chain" id="PRO_0000013523" description="Protein USP1">
    <location>
        <begin position="19"/>
        <end position="113"/>
    </location>
</feature>
<feature type="repeat" description="1-1">
    <location>
        <begin position="32"/>
        <end position="37"/>
    </location>
</feature>
<feature type="repeat" description="1-2">
    <location>
        <begin position="40"/>
        <end position="45"/>
    </location>
</feature>
<feature type="repeat" description="2-1">
    <location>
        <begin position="46"/>
        <end position="49"/>
    </location>
</feature>
<feature type="repeat" description="2-2">
    <location>
        <begin position="50"/>
        <end position="53"/>
    </location>
</feature>
<feature type="repeat" description="3-1">
    <location>
        <begin position="59"/>
        <end position="65"/>
    </location>
</feature>
<feature type="repeat" description="3-2">
    <location>
        <begin position="69"/>
        <end position="75"/>
    </location>
</feature>
<feature type="region of interest" description="2 X 6 AA repeats">
    <location>
        <begin position="32"/>
        <end position="45"/>
    </location>
</feature>
<feature type="region of interest" description="2 X 4 AA approximate tandem repeats">
    <location>
        <begin position="46"/>
        <end position="53"/>
    </location>
</feature>
<feature type="region of interest" description="2 X 7 AA approximate repeats">
    <location>
        <begin position="59"/>
        <end position="75"/>
    </location>
</feature>
<dbReference type="EMBL" id="L08126">
    <property type="protein sequence ID" value="AAB48194.1"/>
    <property type="molecule type" value="mRNA"/>
</dbReference>
<dbReference type="GO" id="GO:0005576">
    <property type="term" value="C:extracellular region"/>
    <property type="evidence" value="ECO:0007669"/>
    <property type="project" value="UniProtKB-SubCell"/>
</dbReference>
<gene>
    <name type="primary">USP1</name>
</gene>
<accession>Q06793</accession>
<sequence length="113" mass="12000">MKITMLFAALSAASGAFAAPAQAVAAAKDLSIGAGVGIGIGAGVGPYGYPYGAYPGWRLQLLPLRWLSLQWIPLRIPILPMVNTWCSVACAQNPSPAHLHTFKPFTSEQFLFL</sequence>
<protein>
    <recommendedName>
        <fullName>Protein USP1</fullName>
    </recommendedName>
</protein>
<organism>
    <name type="scientific">Puccinia graminis</name>
    <name type="common">Black stem rust fungus</name>
    <dbReference type="NCBI Taxonomy" id="5297"/>
    <lineage>
        <taxon>Eukaryota</taxon>
        <taxon>Fungi</taxon>
        <taxon>Dikarya</taxon>
        <taxon>Basidiomycota</taxon>
        <taxon>Pucciniomycotina</taxon>
        <taxon>Pucciniomycetes</taxon>
        <taxon>Pucciniales</taxon>
        <taxon>Pucciniaceae</taxon>
        <taxon>Puccinia</taxon>
    </lineage>
</organism>
<comment type="subcellular location">
    <subcellularLocation>
        <location evidence="2">Secreted</location>
    </subcellularLocation>
</comment>
<comment type="developmental stage">
    <text>Accumulates in a sporulation-specific manner during the uredinial stage of the life cycle.</text>
</comment>
<keyword id="KW-0677">Repeat</keyword>
<keyword id="KW-0964">Secreted</keyword>
<keyword id="KW-0732">Signal</keyword>
<name>USP1_PUCGR</name>
<proteinExistence type="evidence at transcript level"/>
<reference key="1">
    <citation type="journal article" date="1993" name="Mol. Plant Microbe Interact.">
        <title>Molecular cloning and analysis of abundant and stage-specific mRNAs from Puccinia graminis.</title>
        <authorList>
            <person name="Liu Z."/>
            <person name="Szabo L.J."/>
            <person name="Bushnell W.R."/>
        </authorList>
    </citation>
    <scope>NUCLEOTIDE SEQUENCE [MRNA]</scope>
    <source>
        <strain>Sp. tritici</strain>
    </source>
</reference>